<gene>
    <name evidence="2" type="primary">rpsL</name>
    <name type="ordered locus">BT0387</name>
</gene>
<protein>
    <recommendedName>
        <fullName evidence="2">Small ribosomal subunit protein uS12</fullName>
    </recommendedName>
    <alternativeName>
        <fullName evidence="4">30S ribosomal protein S12</fullName>
    </alternativeName>
</protein>
<keyword id="KW-0488">Methylation</keyword>
<keyword id="KW-1185">Reference proteome</keyword>
<keyword id="KW-0687">Ribonucleoprotein</keyword>
<keyword id="KW-0689">Ribosomal protein</keyword>
<keyword id="KW-0694">RNA-binding</keyword>
<keyword id="KW-0699">rRNA-binding</keyword>
<keyword id="KW-0820">tRNA-binding</keyword>
<dbReference type="EMBL" id="CP000049">
    <property type="protein sequence ID" value="AAX17717.1"/>
    <property type="molecule type" value="Genomic_DNA"/>
</dbReference>
<dbReference type="RefSeq" id="WP_011772336.1">
    <property type="nucleotide sequence ID" value="NZ_CP073176.1"/>
</dbReference>
<dbReference type="SMR" id="A1QZH5"/>
<dbReference type="KEGG" id="btu:BT0387"/>
<dbReference type="eggNOG" id="COG0048">
    <property type="taxonomic scope" value="Bacteria"/>
</dbReference>
<dbReference type="HOGENOM" id="CLU_104295_1_2_12"/>
<dbReference type="Proteomes" id="UP000001205">
    <property type="component" value="Chromosome"/>
</dbReference>
<dbReference type="GO" id="GO:0015935">
    <property type="term" value="C:small ribosomal subunit"/>
    <property type="evidence" value="ECO:0007669"/>
    <property type="project" value="InterPro"/>
</dbReference>
<dbReference type="GO" id="GO:0019843">
    <property type="term" value="F:rRNA binding"/>
    <property type="evidence" value="ECO:0007669"/>
    <property type="project" value="UniProtKB-UniRule"/>
</dbReference>
<dbReference type="GO" id="GO:0003735">
    <property type="term" value="F:structural constituent of ribosome"/>
    <property type="evidence" value="ECO:0007669"/>
    <property type="project" value="InterPro"/>
</dbReference>
<dbReference type="GO" id="GO:0000049">
    <property type="term" value="F:tRNA binding"/>
    <property type="evidence" value="ECO:0007669"/>
    <property type="project" value="UniProtKB-UniRule"/>
</dbReference>
<dbReference type="GO" id="GO:0006412">
    <property type="term" value="P:translation"/>
    <property type="evidence" value="ECO:0007669"/>
    <property type="project" value="UniProtKB-UniRule"/>
</dbReference>
<dbReference type="CDD" id="cd03368">
    <property type="entry name" value="Ribosomal_S12"/>
    <property type="match status" value="1"/>
</dbReference>
<dbReference type="FunFam" id="2.40.50.140:FF:000001">
    <property type="entry name" value="30S ribosomal protein S12"/>
    <property type="match status" value="1"/>
</dbReference>
<dbReference type="Gene3D" id="2.40.50.140">
    <property type="entry name" value="Nucleic acid-binding proteins"/>
    <property type="match status" value="1"/>
</dbReference>
<dbReference type="HAMAP" id="MF_00403_B">
    <property type="entry name" value="Ribosomal_uS12_B"/>
    <property type="match status" value="1"/>
</dbReference>
<dbReference type="InterPro" id="IPR012340">
    <property type="entry name" value="NA-bd_OB-fold"/>
</dbReference>
<dbReference type="InterPro" id="IPR006032">
    <property type="entry name" value="Ribosomal_uS12"/>
</dbReference>
<dbReference type="InterPro" id="IPR005679">
    <property type="entry name" value="Ribosomal_uS12_bac"/>
</dbReference>
<dbReference type="NCBIfam" id="TIGR00981">
    <property type="entry name" value="rpsL_bact"/>
    <property type="match status" value="1"/>
</dbReference>
<dbReference type="PANTHER" id="PTHR11652">
    <property type="entry name" value="30S RIBOSOMAL PROTEIN S12 FAMILY MEMBER"/>
    <property type="match status" value="1"/>
</dbReference>
<dbReference type="Pfam" id="PF00164">
    <property type="entry name" value="Ribosom_S12_S23"/>
    <property type="match status" value="1"/>
</dbReference>
<dbReference type="PIRSF" id="PIRSF002133">
    <property type="entry name" value="Ribosomal_S12/S23"/>
    <property type="match status" value="1"/>
</dbReference>
<dbReference type="PRINTS" id="PR01034">
    <property type="entry name" value="RIBOSOMALS12"/>
</dbReference>
<dbReference type="SUPFAM" id="SSF50249">
    <property type="entry name" value="Nucleic acid-binding proteins"/>
    <property type="match status" value="1"/>
</dbReference>
<dbReference type="PROSITE" id="PS00055">
    <property type="entry name" value="RIBOSOMAL_S12"/>
    <property type="match status" value="1"/>
</dbReference>
<evidence type="ECO:0000250" key="1"/>
<evidence type="ECO:0000255" key="2">
    <source>
        <dbReference type="HAMAP-Rule" id="MF_00403"/>
    </source>
</evidence>
<evidence type="ECO:0000256" key="3">
    <source>
        <dbReference type="SAM" id="MobiDB-lite"/>
    </source>
</evidence>
<evidence type="ECO:0000305" key="4"/>
<feature type="chain" id="PRO_1000134618" description="Small ribosomal subunit protein uS12">
    <location>
        <begin position="1"/>
        <end position="124"/>
    </location>
</feature>
<feature type="region of interest" description="Disordered" evidence="3">
    <location>
        <begin position="1"/>
        <end position="25"/>
    </location>
</feature>
<feature type="modified residue" description="3-methylthioaspartic acid" evidence="1">
    <location>
        <position position="89"/>
    </location>
</feature>
<sequence length="124" mass="13833">MPTINQLIRKPRKSQKEKTASPALQNCPQRRGICTRVMTVTPKKPNSALRKVARVRLSNGFEVTAYIPGIGHNLQEHSVVLIRGGRVKDLPGVRYHIIRGAKDTLGVNNRKQGRSKYGTKKPKA</sequence>
<reference key="1">
    <citation type="submission" date="2004-12" db="EMBL/GenBank/DDBJ databases">
        <title>The genome sequence of Borrelia hermsii and Borrelia turicatae: comparative analysis of two agents of endemic N. America relapsing fever.</title>
        <authorList>
            <person name="Porcella S.F."/>
            <person name="Raffel S.J."/>
            <person name="Schrumpf M.E."/>
            <person name="Montgomery B."/>
            <person name="Smith T."/>
            <person name="Schwan T.G."/>
        </authorList>
    </citation>
    <scope>NUCLEOTIDE SEQUENCE [LARGE SCALE GENOMIC DNA]</scope>
    <source>
        <strain>91E135</strain>
    </source>
</reference>
<accession>A1QZH5</accession>
<organism>
    <name type="scientific">Borrelia turicatae (strain 91E135)</name>
    <dbReference type="NCBI Taxonomy" id="314724"/>
    <lineage>
        <taxon>Bacteria</taxon>
        <taxon>Pseudomonadati</taxon>
        <taxon>Spirochaetota</taxon>
        <taxon>Spirochaetia</taxon>
        <taxon>Spirochaetales</taxon>
        <taxon>Borreliaceae</taxon>
        <taxon>Borrelia</taxon>
    </lineage>
</organism>
<proteinExistence type="inferred from homology"/>
<comment type="function">
    <text evidence="2">With S4 and S5 plays an important role in translational accuracy.</text>
</comment>
<comment type="function">
    <text evidence="2">Interacts with and stabilizes bases of the 16S rRNA that are involved in tRNA selection in the A site and with the mRNA backbone. Located at the interface of the 30S and 50S subunits, it traverses the body of the 30S subunit contacting proteins on the other side and probably holding the rRNA structure together. The combined cluster of proteins S8, S12 and S17 appears to hold together the shoulder and platform of the 30S subunit.</text>
</comment>
<comment type="subunit">
    <text evidence="2">Part of the 30S ribosomal subunit. Contacts proteins S8 and S17. May interact with IF1 in the 30S initiation complex.</text>
</comment>
<comment type="similarity">
    <text evidence="2">Belongs to the universal ribosomal protein uS12 family.</text>
</comment>
<name>RS12_BORT9</name>